<dbReference type="EMBL" id="BC011435">
    <property type="protein sequence ID" value="AAH11435.1"/>
    <property type="molecule type" value="mRNA"/>
</dbReference>
<dbReference type="EMBL" id="AK012236">
    <property type="protein sequence ID" value="BAB28112.1"/>
    <property type="molecule type" value="mRNA"/>
</dbReference>
<dbReference type="EMBL" id="AK169298">
    <property type="protein sequence ID" value="BAE41054.1"/>
    <property type="molecule type" value="mRNA"/>
</dbReference>
<dbReference type="CCDS" id="CCDS22771.1"/>
<dbReference type="RefSeq" id="NP_084022.2">
    <property type="nucleotide sequence ID" value="NM_029746.3"/>
</dbReference>
<dbReference type="SMR" id="Q921L5"/>
<dbReference type="BioGRID" id="218073">
    <property type="interactions" value="4"/>
</dbReference>
<dbReference type="FunCoup" id="Q921L5">
    <property type="interactions" value="4079"/>
</dbReference>
<dbReference type="IntAct" id="Q921L5">
    <property type="interactions" value="2"/>
</dbReference>
<dbReference type="STRING" id="10090.ENSMUSP00000034460"/>
<dbReference type="iPTMnet" id="Q921L5"/>
<dbReference type="PhosphoSitePlus" id="Q921L5"/>
<dbReference type="PaxDb" id="10090-ENSMUSP00000034460"/>
<dbReference type="PeptideAtlas" id="Q921L5"/>
<dbReference type="ProteomicsDB" id="283601"/>
<dbReference type="Pumba" id="Q921L5"/>
<dbReference type="Antibodypedia" id="34680">
    <property type="antibodies" value="217 antibodies from 26 providers"/>
</dbReference>
<dbReference type="DNASU" id="76332"/>
<dbReference type="Ensembl" id="ENSMUST00000034460.11">
    <property type="protein sequence ID" value="ENSMUSP00000034460.5"/>
    <property type="gene ID" value="ENSMUSG00000031979.18"/>
</dbReference>
<dbReference type="GeneID" id="76332"/>
<dbReference type="KEGG" id="mmu:76332"/>
<dbReference type="UCSC" id="uc009nxd.2">
    <property type="organism name" value="mouse"/>
</dbReference>
<dbReference type="AGR" id="MGI:1923582"/>
<dbReference type="CTD" id="22796"/>
<dbReference type="MGI" id="MGI:1923582">
    <property type="gene designation" value="Cog2"/>
</dbReference>
<dbReference type="VEuPathDB" id="HostDB:ENSMUSG00000031979"/>
<dbReference type="eggNOG" id="KOG2307">
    <property type="taxonomic scope" value="Eukaryota"/>
</dbReference>
<dbReference type="GeneTree" id="ENSGT00390000012040"/>
<dbReference type="HOGENOM" id="CLU_005470_0_0_1"/>
<dbReference type="InParanoid" id="Q921L5"/>
<dbReference type="OMA" id="CWAEGVY"/>
<dbReference type="OrthoDB" id="332281at2759"/>
<dbReference type="PhylomeDB" id="Q921L5"/>
<dbReference type="TreeFam" id="TF105824"/>
<dbReference type="Reactome" id="R-MMU-6807878">
    <property type="pathway name" value="COPI-mediated anterograde transport"/>
</dbReference>
<dbReference type="Reactome" id="R-MMU-6811438">
    <property type="pathway name" value="Intra-Golgi traffic"/>
</dbReference>
<dbReference type="Reactome" id="R-MMU-6811440">
    <property type="pathway name" value="Retrograde transport at the Trans-Golgi-Network"/>
</dbReference>
<dbReference type="BioGRID-ORCS" id="76332">
    <property type="hits" value="15 hits in 79 CRISPR screens"/>
</dbReference>
<dbReference type="ChiTaRS" id="Cog2">
    <property type="organism name" value="mouse"/>
</dbReference>
<dbReference type="PRO" id="PR:Q921L5"/>
<dbReference type="Proteomes" id="UP000000589">
    <property type="component" value="Chromosome 8"/>
</dbReference>
<dbReference type="RNAct" id="Q921L5">
    <property type="molecule type" value="protein"/>
</dbReference>
<dbReference type="Bgee" id="ENSMUSG00000031979">
    <property type="expression patterns" value="Expressed in embryonic brain and 185 other cell types or tissues"/>
</dbReference>
<dbReference type="ExpressionAtlas" id="Q921L5">
    <property type="expression patterns" value="baseline and differential"/>
</dbReference>
<dbReference type="GO" id="GO:0000139">
    <property type="term" value="C:Golgi membrane"/>
    <property type="evidence" value="ECO:0007669"/>
    <property type="project" value="UniProtKB-SubCell"/>
</dbReference>
<dbReference type="GO" id="GO:0005795">
    <property type="term" value="C:Golgi stack"/>
    <property type="evidence" value="ECO:0007669"/>
    <property type="project" value="Ensembl"/>
</dbReference>
<dbReference type="GO" id="GO:0017119">
    <property type="term" value="C:Golgi transport complex"/>
    <property type="evidence" value="ECO:0007669"/>
    <property type="project" value="Ensembl"/>
</dbReference>
<dbReference type="GO" id="GO:0044877">
    <property type="term" value="F:protein-containing complex binding"/>
    <property type="evidence" value="ECO:0007669"/>
    <property type="project" value="Ensembl"/>
</dbReference>
<dbReference type="GO" id="GO:0070085">
    <property type="term" value="P:glycosylation"/>
    <property type="evidence" value="ECO:0007669"/>
    <property type="project" value="Ensembl"/>
</dbReference>
<dbReference type="GO" id="GO:0007030">
    <property type="term" value="P:Golgi organization"/>
    <property type="evidence" value="ECO:0007669"/>
    <property type="project" value="Ensembl"/>
</dbReference>
<dbReference type="GO" id="GO:0015031">
    <property type="term" value="P:protein transport"/>
    <property type="evidence" value="ECO:0007669"/>
    <property type="project" value="UniProtKB-KW"/>
</dbReference>
<dbReference type="GO" id="GO:0000301">
    <property type="term" value="P:retrograde transport, vesicle recycling within Golgi"/>
    <property type="evidence" value="ECO:0007669"/>
    <property type="project" value="Ensembl"/>
</dbReference>
<dbReference type="InterPro" id="IPR009316">
    <property type="entry name" value="COG2"/>
</dbReference>
<dbReference type="InterPro" id="IPR024603">
    <property type="entry name" value="COG_complex_COG2_C"/>
</dbReference>
<dbReference type="InterPro" id="IPR024602">
    <property type="entry name" value="COG_su2_N"/>
</dbReference>
<dbReference type="PANTHER" id="PTHR12961">
    <property type="entry name" value="CONSERVED OLIGOMERIC GOLGI COMPLEX COMPONENT 2"/>
    <property type="match status" value="1"/>
</dbReference>
<dbReference type="PANTHER" id="PTHR12961:SF0">
    <property type="entry name" value="CONSERVED OLIGOMERIC GOLGI COMPLEX SUBUNIT 2"/>
    <property type="match status" value="1"/>
</dbReference>
<dbReference type="Pfam" id="PF12022">
    <property type="entry name" value="COG2_C"/>
    <property type="match status" value="1"/>
</dbReference>
<dbReference type="Pfam" id="PF06148">
    <property type="entry name" value="COG2_N"/>
    <property type="match status" value="1"/>
</dbReference>
<comment type="function">
    <text evidence="1">Required for normal Golgi morphology and function.</text>
</comment>
<comment type="subunit">
    <text evidence="1">Component of the conserved oligomeric Golgi complex which is composed of eight different subunits and is required for normal Golgi morphology and localization.</text>
</comment>
<comment type="subcellular location">
    <subcellularLocation>
        <location evidence="1">Golgi apparatus membrane</location>
        <topology evidence="1">Peripheral membrane protein</topology>
        <orientation evidence="1">Cytoplasmic side</orientation>
    </subcellularLocation>
</comment>
<comment type="similarity">
    <text evidence="3">Belongs to the COG2 family.</text>
</comment>
<sequence>MEKRRMNLPTGPDTLCFDKDEFMKEDFDVDHFVSDCRKRVQLEELRDDLELYYKLLKTAMVELINKDYADFVNLSTNLVGMDRALNQLSVPLGQLREEVLSLRSSVSEGILAVDERMSKQEDIRKKKMSVLRLIQVIRSVEKIEKILNSQSSKDVSSQEASSPLLTGQVLERIATEFNQLQFHAVQSKGMPLLDKVRPRIAGITAMLQQSLEGLLLEGLQTSDVDIVRHCLRTYATIDKTQDAEALVGQVLVKPYVNEVIVEQFVESHPSSLQLMYNKLLEFVPHHCRLLREVTGGAVSSEKGTIVPGYDFLVNSVWPEIVRGLEEKLPSLFNPGDPDAFHQKYTVSMDFVQRFERQCGSQASVKRLRAHPAYHNFSNKWNLPVYFQIRFREVAGSLEAALTDGLEDAPAGSPYCLLASHRTWISLGKCWSDEMFLPLLAHRLWRLTLQILARFSVFVSELSVRPVSNESAKETKKPLTGSKDPSEDQGSHASEASAASISSTQLVYVVSDLGRLQEWLPDLLETVKQKLEMIGFKNFSSISAALEDSQSALSAHVPALSSRIVQDLSESCFSYLKSALEVPRLYRRTNKEVPSTASSYVDSALKPLYQLQSGHGDKVQPAVMQSWLQEALSDSTHRYFETVSDVLNSVKKMEESLKRLKQARRSPATNPVSSSGGGMSDDDKIRLQLALDVEHLGEQIQRMGLQTSDIKSFPALMELVLAARDQAAAEQP</sequence>
<proteinExistence type="evidence at protein level"/>
<accession>Q921L5</accession>
<accession>Q3TF44</accession>
<accession>Q9CSQ1</accession>
<protein>
    <recommendedName>
        <fullName>Conserved oligomeric Golgi complex subunit 2</fullName>
        <shortName>COG complex subunit 2</shortName>
    </recommendedName>
    <alternativeName>
        <fullName>Component of oligomeric Golgi complex 2</fullName>
    </alternativeName>
    <alternativeName>
        <fullName>Low density lipoprotein receptor defect C-complementing protein</fullName>
    </alternativeName>
</protein>
<reference key="1">
    <citation type="journal article" date="2004" name="Genome Res.">
        <title>The status, quality, and expansion of the NIH full-length cDNA project: the Mammalian Gene Collection (MGC).</title>
        <authorList>
            <consortium name="The MGC Project Team"/>
        </authorList>
    </citation>
    <scope>NUCLEOTIDE SEQUENCE [LARGE SCALE MRNA]</scope>
</reference>
<reference key="2">
    <citation type="journal article" date="2005" name="Science">
        <title>The transcriptional landscape of the mammalian genome.</title>
        <authorList>
            <person name="Carninci P."/>
            <person name="Kasukawa T."/>
            <person name="Katayama S."/>
            <person name="Gough J."/>
            <person name="Frith M.C."/>
            <person name="Maeda N."/>
            <person name="Oyama R."/>
            <person name="Ravasi T."/>
            <person name="Lenhard B."/>
            <person name="Wells C."/>
            <person name="Kodzius R."/>
            <person name="Shimokawa K."/>
            <person name="Bajic V.B."/>
            <person name="Brenner S.E."/>
            <person name="Batalov S."/>
            <person name="Forrest A.R."/>
            <person name="Zavolan M."/>
            <person name="Davis M.J."/>
            <person name="Wilming L.G."/>
            <person name="Aidinis V."/>
            <person name="Allen J.E."/>
            <person name="Ambesi-Impiombato A."/>
            <person name="Apweiler R."/>
            <person name="Aturaliya R.N."/>
            <person name="Bailey T.L."/>
            <person name="Bansal M."/>
            <person name="Baxter L."/>
            <person name="Beisel K.W."/>
            <person name="Bersano T."/>
            <person name="Bono H."/>
            <person name="Chalk A.M."/>
            <person name="Chiu K.P."/>
            <person name="Choudhary V."/>
            <person name="Christoffels A."/>
            <person name="Clutterbuck D.R."/>
            <person name="Crowe M.L."/>
            <person name="Dalla E."/>
            <person name="Dalrymple B.P."/>
            <person name="de Bono B."/>
            <person name="Della Gatta G."/>
            <person name="di Bernardo D."/>
            <person name="Down T."/>
            <person name="Engstrom P."/>
            <person name="Fagiolini M."/>
            <person name="Faulkner G."/>
            <person name="Fletcher C.F."/>
            <person name="Fukushima T."/>
            <person name="Furuno M."/>
            <person name="Futaki S."/>
            <person name="Gariboldi M."/>
            <person name="Georgii-Hemming P."/>
            <person name="Gingeras T.R."/>
            <person name="Gojobori T."/>
            <person name="Green R.E."/>
            <person name="Gustincich S."/>
            <person name="Harbers M."/>
            <person name="Hayashi Y."/>
            <person name="Hensch T.K."/>
            <person name="Hirokawa N."/>
            <person name="Hill D."/>
            <person name="Huminiecki L."/>
            <person name="Iacono M."/>
            <person name="Ikeo K."/>
            <person name="Iwama A."/>
            <person name="Ishikawa T."/>
            <person name="Jakt M."/>
            <person name="Kanapin A."/>
            <person name="Katoh M."/>
            <person name="Kawasawa Y."/>
            <person name="Kelso J."/>
            <person name="Kitamura H."/>
            <person name="Kitano H."/>
            <person name="Kollias G."/>
            <person name="Krishnan S.P."/>
            <person name="Kruger A."/>
            <person name="Kummerfeld S.K."/>
            <person name="Kurochkin I.V."/>
            <person name="Lareau L.F."/>
            <person name="Lazarevic D."/>
            <person name="Lipovich L."/>
            <person name="Liu J."/>
            <person name="Liuni S."/>
            <person name="McWilliam S."/>
            <person name="Madan Babu M."/>
            <person name="Madera M."/>
            <person name="Marchionni L."/>
            <person name="Matsuda H."/>
            <person name="Matsuzawa S."/>
            <person name="Miki H."/>
            <person name="Mignone F."/>
            <person name="Miyake S."/>
            <person name="Morris K."/>
            <person name="Mottagui-Tabar S."/>
            <person name="Mulder N."/>
            <person name="Nakano N."/>
            <person name="Nakauchi H."/>
            <person name="Ng P."/>
            <person name="Nilsson R."/>
            <person name="Nishiguchi S."/>
            <person name="Nishikawa S."/>
            <person name="Nori F."/>
            <person name="Ohara O."/>
            <person name="Okazaki Y."/>
            <person name="Orlando V."/>
            <person name="Pang K.C."/>
            <person name="Pavan W.J."/>
            <person name="Pavesi G."/>
            <person name="Pesole G."/>
            <person name="Petrovsky N."/>
            <person name="Piazza S."/>
            <person name="Reed J."/>
            <person name="Reid J.F."/>
            <person name="Ring B.Z."/>
            <person name="Ringwald M."/>
            <person name="Rost B."/>
            <person name="Ruan Y."/>
            <person name="Salzberg S.L."/>
            <person name="Sandelin A."/>
            <person name="Schneider C."/>
            <person name="Schoenbach C."/>
            <person name="Sekiguchi K."/>
            <person name="Semple C.A."/>
            <person name="Seno S."/>
            <person name="Sessa L."/>
            <person name="Sheng Y."/>
            <person name="Shibata Y."/>
            <person name="Shimada H."/>
            <person name="Shimada K."/>
            <person name="Silva D."/>
            <person name="Sinclair B."/>
            <person name="Sperling S."/>
            <person name="Stupka E."/>
            <person name="Sugiura K."/>
            <person name="Sultana R."/>
            <person name="Takenaka Y."/>
            <person name="Taki K."/>
            <person name="Tammoja K."/>
            <person name="Tan S.L."/>
            <person name="Tang S."/>
            <person name="Taylor M.S."/>
            <person name="Tegner J."/>
            <person name="Teichmann S.A."/>
            <person name="Ueda H.R."/>
            <person name="van Nimwegen E."/>
            <person name="Verardo R."/>
            <person name="Wei C.L."/>
            <person name="Yagi K."/>
            <person name="Yamanishi H."/>
            <person name="Zabarovsky E."/>
            <person name="Zhu S."/>
            <person name="Zimmer A."/>
            <person name="Hide W."/>
            <person name="Bult C."/>
            <person name="Grimmond S.M."/>
            <person name="Teasdale R.D."/>
            <person name="Liu E.T."/>
            <person name="Brusic V."/>
            <person name="Quackenbush J."/>
            <person name="Wahlestedt C."/>
            <person name="Mattick J.S."/>
            <person name="Hume D.A."/>
            <person name="Kai C."/>
            <person name="Sasaki D."/>
            <person name="Tomaru Y."/>
            <person name="Fukuda S."/>
            <person name="Kanamori-Katayama M."/>
            <person name="Suzuki M."/>
            <person name="Aoki J."/>
            <person name="Arakawa T."/>
            <person name="Iida J."/>
            <person name="Imamura K."/>
            <person name="Itoh M."/>
            <person name="Kato T."/>
            <person name="Kawaji H."/>
            <person name="Kawagashira N."/>
            <person name="Kawashima T."/>
            <person name="Kojima M."/>
            <person name="Kondo S."/>
            <person name="Konno H."/>
            <person name="Nakano K."/>
            <person name="Ninomiya N."/>
            <person name="Nishio T."/>
            <person name="Okada M."/>
            <person name="Plessy C."/>
            <person name="Shibata K."/>
            <person name="Shiraki T."/>
            <person name="Suzuki S."/>
            <person name="Tagami M."/>
            <person name="Waki K."/>
            <person name="Watahiki A."/>
            <person name="Okamura-Oho Y."/>
            <person name="Suzuki H."/>
            <person name="Kawai J."/>
            <person name="Hayashizaki Y."/>
        </authorList>
    </citation>
    <scope>NUCLEOTIDE SEQUENCE [LARGE SCALE MRNA]</scope>
    <source>
        <strain>C57BL/6J</strain>
        <tissue>Embryo</tissue>
    </source>
</reference>
<reference key="3">
    <citation type="journal article" date="2010" name="Cell">
        <title>A tissue-specific atlas of mouse protein phosphorylation and expression.</title>
        <authorList>
            <person name="Huttlin E.L."/>
            <person name="Jedrychowski M.P."/>
            <person name="Elias J.E."/>
            <person name="Goswami T."/>
            <person name="Rad R."/>
            <person name="Beausoleil S.A."/>
            <person name="Villen J."/>
            <person name="Haas W."/>
            <person name="Sowa M.E."/>
            <person name="Gygi S.P."/>
        </authorList>
    </citation>
    <scope>IDENTIFICATION BY MASS SPECTROMETRY [LARGE SCALE ANALYSIS]</scope>
    <source>
        <tissue>Brain</tissue>
        <tissue>Brown adipose tissue</tissue>
        <tissue>Heart</tissue>
        <tissue>Kidney</tissue>
        <tissue>Liver</tissue>
        <tissue>Lung</tissue>
        <tissue>Pancreas</tissue>
        <tissue>Spleen</tissue>
        <tissue>Testis</tissue>
    </source>
</reference>
<name>COG2_MOUSE</name>
<feature type="chain" id="PRO_0000213496" description="Conserved oligomeric Golgi complex subunit 2">
    <location>
        <begin position="1"/>
        <end position="731"/>
    </location>
</feature>
<feature type="region of interest" description="Disordered" evidence="2">
    <location>
        <begin position="469"/>
        <end position="496"/>
    </location>
</feature>
<feature type="region of interest" description="Disordered" evidence="2">
    <location>
        <begin position="659"/>
        <end position="680"/>
    </location>
</feature>
<feature type="sequence conflict" description="In Ref. 1; AAH11435." evidence="3" ref="1">
    <original>S</original>
    <variation>G</variation>
    <location>
        <position position="271"/>
    </location>
</feature>
<feature type="sequence conflict" description="In Ref. 1; AAH11435." evidence="3" ref="1">
    <original>L</original>
    <variation>M</variation>
    <location>
        <position position="515"/>
    </location>
</feature>
<feature type="sequence conflict" description="In Ref. 1; AAH11435." evidence="3" ref="1">
    <original>V</original>
    <variation>I</variation>
    <location>
        <position position="719"/>
    </location>
</feature>
<gene>
    <name type="primary">Cog2</name>
    <name type="synonym">Ldlc</name>
</gene>
<keyword id="KW-0333">Golgi apparatus</keyword>
<keyword id="KW-0472">Membrane</keyword>
<keyword id="KW-0653">Protein transport</keyword>
<keyword id="KW-1185">Reference proteome</keyword>
<keyword id="KW-0813">Transport</keyword>
<evidence type="ECO:0000250" key="1"/>
<evidence type="ECO:0000256" key="2">
    <source>
        <dbReference type="SAM" id="MobiDB-lite"/>
    </source>
</evidence>
<evidence type="ECO:0000305" key="3"/>
<organism>
    <name type="scientific">Mus musculus</name>
    <name type="common">Mouse</name>
    <dbReference type="NCBI Taxonomy" id="10090"/>
    <lineage>
        <taxon>Eukaryota</taxon>
        <taxon>Metazoa</taxon>
        <taxon>Chordata</taxon>
        <taxon>Craniata</taxon>
        <taxon>Vertebrata</taxon>
        <taxon>Euteleostomi</taxon>
        <taxon>Mammalia</taxon>
        <taxon>Eutheria</taxon>
        <taxon>Euarchontoglires</taxon>
        <taxon>Glires</taxon>
        <taxon>Rodentia</taxon>
        <taxon>Myomorpha</taxon>
        <taxon>Muroidea</taxon>
        <taxon>Muridae</taxon>
        <taxon>Murinae</taxon>
        <taxon>Mus</taxon>
        <taxon>Mus</taxon>
    </lineage>
</organism>